<sequence length="195" mass="22336">MAVENEGVLLVLSSPSGAGKTTILERLLERSTNLVRSVSMTTRKPRPGEINGKDYFFVTKKEFHELCEAGQMLEYARVFENFYGIPKSFIEQNLSSGISVLLSIDWQGAFHLFELMREKVISVFILPPSMEELRLRLQKRNSDSASEIEHRLAEAQKEMSKRDKYDYVVINDDIDKSVEEISSILDKERLKRSGV</sequence>
<reference key="1">
    <citation type="journal article" date="2005" name="PLoS Biol.">
        <title>The Wolbachia genome of Brugia malayi: endosymbiont evolution within a human pathogenic nematode.</title>
        <authorList>
            <person name="Foster J."/>
            <person name="Ganatra M."/>
            <person name="Kamal I."/>
            <person name="Ware J."/>
            <person name="Makarova K."/>
            <person name="Ivanova N."/>
            <person name="Bhattacharyya A."/>
            <person name="Kapatral V."/>
            <person name="Kumar S."/>
            <person name="Posfai J."/>
            <person name="Vincze T."/>
            <person name="Ingram J."/>
            <person name="Moran L."/>
            <person name="Lapidus A."/>
            <person name="Omelchenko M."/>
            <person name="Kyrpides N."/>
            <person name="Ghedin E."/>
            <person name="Wang S."/>
            <person name="Goltsman E."/>
            <person name="Joukov V."/>
            <person name="Ostrovskaya O."/>
            <person name="Tsukerman K."/>
            <person name="Mazur M."/>
            <person name="Comb D."/>
            <person name="Koonin E."/>
            <person name="Slatko B."/>
        </authorList>
    </citation>
    <scope>NUCLEOTIDE SEQUENCE [LARGE SCALE GENOMIC DNA]</scope>
    <source>
        <strain>TRS</strain>
    </source>
</reference>
<comment type="function">
    <text evidence="1">Essential for recycling GMP and indirectly, cGMP.</text>
</comment>
<comment type="catalytic activity">
    <reaction evidence="1">
        <text>GMP + ATP = GDP + ADP</text>
        <dbReference type="Rhea" id="RHEA:20780"/>
        <dbReference type="ChEBI" id="CHEBI:30616"/>
        <dbReference type="ChEBI" id="CHEBI:58115"/>
        <dbReference type="ChEBI" id="CHEBI:58189"/>
        <dbReference type="ChEBI" id="CHEBI:456216"/>
        <dbReference type="EC" id="2.7.4.8"/>
    </reaction>
</comment>
<comment type="subcellular location">
    <subcellularLocation>
        <location evidence="1">Cytoplasm</location>
    </subcellularLocation>
</comment>
<comment type="similarity">
    <text evidence="1">Belongs to the guanylate kinase family.</text>
</comment>
<organism>
    <name type="scientific">Wolbachia sp. subsp. Brugia malayi (strain TRS)</name>
    <dbReference type="NCBI Taxonomy" id="292805"/>
    <lineage>
        <taxon>Bacteria</taxon>
        <taxon>Pseudomonadati</taxon>
        <taxon>Pseudomonadota</taxon>
        <taxon>Alphaproteobacteria</taxon>
        <taxon>Rickettsiales</taxon>
        <taxon>Anaplasmataceae</taxon>
        <taxon>Wolbachieae</taxon>
        <taxon>Wolbachia</taxon>
    </lineage>
</organism>
<accession>Q5GS56</accession>
<keyword id="KW-0067">ATP-binding</keyword>
<keyword id="KW-0963">Cytoplasm</keyword>
<keyword id="KW-0418">Kinase</keyword>
<keyword id="KW-0547">Nucleotide-binding</keyword>
<keyword id="KW-1185">Reference proteome</keyword>
<keyword id="KW-0808">Transferase</keyword>
<gene>
    <name evidence="1" type="primary">gmk</name>
    <name type="ordered locus">Wbm0580</name>
</gene>
<proteinExistence type="inferred from homology"/>
<dbReference type="EC" id="2.7.4.8" evidence="1"/>
<dbReference type="EMBL" id="AE017321">
    <property type="protein sequence ID" value="AAW71168.1"/>
    <property type="molecule type" value="Genomic_DNA"/>
</dbReference>
<dbReference type="RefSeq" id="WP_011256778.1">
    <property type="nucleotide sequence ID" value="NC_006833.1"/>
</dbReference>
<dbReference type="SMR" id="Q5GS56"/>
<dbReference type="STRING" id="292805.Wbm0580"/>
<dbReference type="KEGG" id="wbm:Wbm0580"/>
<dbReference type="eggNOG" id="COG0194">
    <property type="taxonomic scope" value="Bacteria"/>
</dbReference>
<dbReference type="HOGENOM" id="CLU_001715_1_2_5"/>
<dbReference type="BRENDA" id="2.7.4.8">
    <property type="organism ID" value="997"/>
</dbReference>
<dbReference type="Proteomes" id="UP000000534">
    <property type="component" value="Chromosome"/>
</dbReference>
<dbReference type="GO" id="GO:0005829">
    <property type="term" value="C:cytosol"/>
    <property type="evidence" value="ECO:0007669"/>
    <property type="project" value="TreeGrafter"/>
</dbReference>
<dbReference type="GO" id="GO:0005524">
    <property type="term" value="F:ATP binding"/>
    <property type="evidence" value="ECO:0007669"/>
    <property type="project" value="UniProtKB-UniRule"/>
</dbReference>
<dbReference type="GO" id="GO:0004385">
    <property type="term" value="F:guanylate kinase activity"/>
    <property type="evidence" value="ECO:0007669"/>
    <property type="project" value="UniProtKB-UniRule"/>
</dbReference>
<dbReference type="CDD" id="cd00071">
    <property type="entry name" value="GMPK"/>
    <property type="match status" value="1"/>
</dbReference>
<dbReference type="FunFam" id="3.30.63.10:FF:000002">
    <property type="entry name" value="Guanylate kinase 1"/>
    <property type="match status" value="1"/>
</dbReference>
<dbReference type="Gene3D" id="3.30.63.10">
    <property type="entry name" value="Guanylate Kinase phosphate binding domain"/>
    <property type="match status" value="1"/>
</dbReference>
<dbReference type="Gene3D" id="3.40.50.300">
    <property type="entry name" value="P-loop containing nucleotide triphosphate hydrolases"/>
    <property type="match status" value="1"/>
</dbReference>
<dbReference type="HAMAP" id="MF_00328">
    <property type="entry name" value="Guanylate_kinase"/>
    <property type="match status" value="1"/>
</dbReference>
<dbReference type="InterPro" id="IPR008145">
    <property type="entry name" value="GK/Ca_channel_bsu"/>
</dbReference>
<dbReference type="InterPro" id="IPR008144">
    <property type="entry name" value="Guanylate_kin-like_dom"/>
</dbReference>
<dbReference type="InterPro" id="IPR017665">
    <property type="entry name" value="Guanylate_kinase"/>
</dbReference>
<dbReference type="InterPro" id="IPR020590">
    <property type="entry name" value="Guanylate_kinase_CS"/>
</dbReference>
<dbReference type="InterPro" id="IPR027417">
    <property type="entry name" value="P-loop_NTPase"/>
</dbReference>
<dbReference type="NCBIfam" id="TIGR03263">
    <property type="entry name" value="guanyl_kin"/>
    <property type="match status" value="1"/>
</dbReference>
<dbReference type="PANTHER" id="PTHR23117:SF13">
    <property type="entry name" value="GUANYLATE KINASE"/>
    <property type="match status" value="1"/>
</dbReference>
<dbReference type="PANTHER" id="PTHR23117">
    <property type="entry name" value="GUANYLATE KINASE-RELATED"/>
    <property type="match status" value="1"/>
</dbReference>
<dbReference type="Pfam" id="PF00625">
    <property type="entry name" value="Guanylate_kin"/>
    <property type="match status" value="1"/>
</dbReference>
<dbReference type="SMART" id="SM00072">
    <property type="entry name" value="GuKc"/>
    <property type="match status" value="1"/>
</dbReference>
<dbReference type="SUPFAM" id="SSF52540">
    <property type="entry name" value="P-loop containing nucleoside triphosphate hydrolases"/>
    <property type="match status" value="1"/>
</dbReference>
<dbReference type="PROSITE" id="PS00856">
    <property type="entry name" value="GUANYLATE_KINASE_1"/>
    <property type="match status" value="1"/>
</dbReference>
<dbReference type="PROSITE" id="PS50052">
    <property type="entry name" value="GUANYLATE_KINASE_2"/>
    <property type="match status" value="1"/>
</dbReference>
<evidence type="ECO:0000255" key="1">
    <source>
        <dbReference type="HAMAP-Rule" id="MF_00328"/>
    </source>
</evidence>
<feature type="chain" id="PRO_0000266434" description="Guanylate kinase">
    <location>
        <begin position="1"/>
        <end position="195"/>
    </location>
</feature>
<feature type="domain" description="Guanylate kinase-like" evidence="1">
    <location>
        <begin position="7"/>
        <end position="186"/>
    </location>
</feature>
<feature type="binding site" evidence="1">
    <location>
        <begin position="14"/>
        <end position="21"/>
    </location>
    <ligand>
        <name>ATP</name>
        <dbReference type="ChEBI" id="CHEBI:30616"/>
    </ligand>
</feature>
<protein>
    <recommendedName>
        <fullName evidence="1">Guanylate kinase</fullName>
        <ecNumber evidence="1">2.7.4.8</ecNumber>
    </recommendedName>
    <alternativeName>
        <fullName evidence="1">GMP kinase</fullName>
    </alternativeName>
</protein>
<name>KGUA_WOLTR</name>